<evidence type="ECO:0000250" key="1">
    <source>
        <dbReference type="UniProtKB" id="P18074"/>
    </source>
</evidence>
<evidence type="ECO:0000250" key="2">
    <source>
        <dbReference type="UniProtKB" id="P22516"/>
    </source>
</evidence>
<evidence type="ECO:0000250" key="3">
    <source>
        <dbReference type="UniProtKB" id="Q96FC9"/>
    </source>
</evidence>
<evidence type="ECO:0000255" key="4">
    <source>
        <dbReference type="PROSITE-ProRule" id="PRU00541"/>
    </source>
</evidence>
<evidence type="ECO:0000256" key="5">
    <source>
        <dbReference type="SAM" id="MobiDB-lite"/>
    </source>
</evidence>
<evidence type="ECO:0000305" key="6"/>
<accession>Q4WWE9</accession>
<proteinExistence type="inferred from homology"/>
<keyword id="KW-0067">ATP-binding</keyword>
<keyword id="KW-0131">Cell cycle</keyword>
<keyword id="KW-0238">DNA-binding</keyword>
<keyword id="KW-0347">Helicase</keyword>
<keyword id="KW-0378">Hydrolase</keyword>
<keyword id="KW-0408">Iron</keyword>
<keyword id="KW-0411">Iron-sulfur</keyword>
<keyword id="KW-0413">Isomerase</keyword>
<keyword id="KW-0479">Metal-binding</keyword>
<keyword id="KW-0547">Nucleotide-binding</keyword>
<keyword id="KW-0539">Nucleus</keyword>
<keyword id="KW-1185">Reference proteome</keyword>
<dbReference type="EC" id="5.6.2.3" evidence="3"/>
<dbReference type="EMBL" id="AAHF01000002">
    <property type="protein sequence ID" value="EAL93004.1"/>
    <property type="molecule type" value="Genomic_DNA"/>
</dbReference>
<dbReference type="RefSeq" id="XP_755042.1">
    <property type="nucleotide sequence ID" value="XM_749949.1"/>
</dbReference>
<dbReference type="SMR" id="Q4WWE9"/>
<dbReference type="FunCoup" id="Q4WWE9">
    <property type="interactions" value="979"/>
</dbReference>
<dbReference type="STRING" id="330879.Q4WWE9"/>
<dbReference type="EnsemblFungi" id="EAL93004">
    <property type="protein sequence ID" value="EAL93004"/>
    <property type="gene ID" value="AFUA_3G05590"/>
</dbReference>
<dbReference type="GeneID" id="3512045"/>
<dbReference type="KEGG" id="afm:AFUA_3G05590"/>
<dbReference type="VEuPathDB" id="FungiDB:Afu3g05590"/>
<dbReference type="eggNOG" id="KOG1133">
    <property type="taxonomic scope" value="Eukaryota"/>
</dbReference>
<dbReference type="HOGENOM" id="CLU_006515_2_0_1"/>
<dbReference type="InParanoid" id="Q4WWE9"/>
<dbReference type="OMA" id="QTHQFRD"/>
<dbReference type="OrthoDB" id="267079at2759"/>
<dbReference type="Proteomes" id="UP000002530">
    <property type="component" value="Chromosome 3"/>
</dbReference>
<dbReference type="GO" id="GO:0000785">
    <property type="term" value="C:chromatin"/>
    <property type="evidence" value="ECO:0007669"/>
    <property type="project" value="EnsemblFungi"/>
</dbReference>
<dbReference type="GO" id="GO:0005634">
    <property type="term" value="C:nucleus"/>
    <property type="evidence" value="ECO:0000318"/>
    <property type="project" value="GO_Central"/>
</dbReference>
<dbReference type="GO" id="GO:0005524">
    <property type="term" value="F:ATP binding"/>
    <property type="evidence" value="ECO:0007669"/>
    <property type="project" value="UniProtKB-KW"/>
</dbReference>
<dbReference type="GO" id="GO:0016887">
    <property type="term" value="F:ATP hydrolysis activity"/>
    <property type="evidence" value="ECO:0007669"/>
    <property type="project" value="RHEA"/>
</dbReference>
<dbReference type="GO" id="GO:0003677">
    <property type="term" value="F:DNA binding"/>
    <property type="evidence" value="ECO:0007669"/>
    <property type="project" value="UniProtKB-KW"/>
</dbReference>
<dbReference type="GO" id="GO:0003678">
    <property type="term" value="F:DNA helicase activity"/>
    <property type="evidence" value="ECO:0000318"/>
    <property type="project" value="GO_Central"/>
</dbReference>
<dbReference type="GO" id="GO:0051536">
    <property type="term" value="F:iron-sulfur cluster binding"/>
    <property type="evidence" value="ECO:0007669"/>
    <property type="project" value="UniProtKB-KW"/>
</dbReference>
<dbReference type="GO" id="GO:0046872">
    <property type="term" value="F:metal ion binding"/>
    <property type="evidence" value="ECO:0007669"/>
    <property type="project" value="UniProtKB-KW"/>
</dbReference>
<dbReference type="GO" id="GO:0034085">
    <property type="term" value="P:establishment of sister chromatid cohesion"/>
    <property type="evidence" value="ECO:0000318"/>
    <property type="project" value="GO_Central"/>
</dbReference>
<dbReference type="GO" id="GO:0036297">
    <property type="term" value="P:interstrand cross-link repair"/>
    <property type="evidence" value="ECO:0007669"/>
    <property type="project" value="EnsemblFungi"/>
</dbReference>
<dbReference type="GO" id="GO:0031571">
    <property type="term" value="P:mitotic G1 DNA damage checkpoint signaling"/>
    <property type="evidence" value="ECO:0007669"/>
    <property type="project" value="EnsemblFungi"/>
</dbReference>
<dbReference type="GO" id="GO:0007064">
    <property type="term" value="P:mitotic sister chromatid cohesion"/>
    <property type="evidence" value="ECO:0007669"/>
    <property type="project" value="EnsemblFungi"/>
</dbReference>
<dbReference type="CDD" id="cd18788">
    <property type="entry name" value="SF2_C_XPD"/>
    <property type="match status" value="1"/>
</dbReference>
<dbReference type="FunFam" id="3.40.50.300:FF:001372">
    <property type="entry name" value="ATP-dependent DNA helicase chl1"/>
    <property type="match status" value="1"/>
</dbReference>
<dbReference type="FunFam" id="3.40.50.300:FF:002774">
    <property type="entry name" value="ATP-dependent DNA helicase chl1"/>
    <property type="match status" value="1"/>
</dbReference>
<dbReference type="Gene3D" id="3.40.50.300">
    <property type="entry name" value="P-loop containing nucleotide triphosphate hydrolases"/>
    <property type="match status" value="2"/>
</dbReference>
<dbReference type="InterPro" id="IPR006555">
    <property type="entry name" value="ATP-dep_Helicase_C"/>
</dbReference>
<dbReference type="InterPro" id="IPR045028">
    <property type="entry name" value="DinG/Rad3-like"/>
</dbReference>
<dbReference type="InterPro" id="IPR002464">
    <property type="entry name" value="DNA/RNA_helicase_DEAH_CS"/>
</dbReference>
<dbReference type="InterPro" id="IPR014013">
    <property type="entry name" value="Helic_SF1/SF2_ATP-bd_DinG/Rad3"/>
</dbReference>
<dbReference type="InterPro" id="IPR006554">
    <property type="entry name" value="Helicase-like_DEXD_c2"/>
</dbReference>
<dbReference type="InterPro" id="IPR027417">
    <property type="entry name" value="P-loop_NTPase"/>
</dbReference>
<dbReference type="InterPro" id="IPR010614">
    <property type="entry name" value="RAD3-like_helicase_DEAD"/>
</dbReference>
<dbReference type="InterPro" id="IPR013020">
    <property type="entry name" value="Rad3/Chl1-like"/>
</dbReference>
<dbReference type="NCBIfam" id="TIGR00604">
    <property type="entry name" value="rad3"/>
    <property type="match status" value="1"/>
</dbReference>
<dbReference type="PANTHER" id="PTHR11472:SF41">
    <property type="entry name" value="ATP-DEPENDENT DNA HELICASE DDX11-RELATED"/>
    <property type="match status" value="1"/>
</dbReference>
<dbReference type="PANTHER" id="PTHR11472">
    <property type="entry name" value="DNA REPAIR DEAD HELICASE RAD3/XP-D SUBFAMILY MEMBER"/>
    <property type="match status" value="1"/>
</dbReference>
<dbReference type="Pfam" id="PF06733">
    <property type="entry name" value="DEAD_2"/>
    <property type="match status" value="1"/>
</dbReference>
<dbReference type="Pfam" id="PF13307">
    <property type="entry name" value="Helicase_C_2"/>
    <property type="match status" value="1"/>
</dbReference>
<dbReference type="SMART" id="SM00488">
    <property type="entry name" value="DEXDc2"/>
    <property type="match status" value="1"/>
</dbReference>
<dbReference type="SMART" id="SM00491">
    <property type="entry name" value="HELICc2"/>
    <property type="match status" value="1"/>
</dbReference>
<dbReference type="PROSITE" id="PS00690">
    <property type="entry name" value="DEAH_ATP_HELICASE"/>
    <property type="match status" value="1"/>
</dbReference>
<dbReference type="PROSITE" id="PS51193">
    <property type="entry name" value="HELICASE_ATP_BIND_2"/>
    <property type="match status" value="1"/>
</dbReference>
<feature type="chain" id="PRO_0000351003" description="ATP-dependent DNA helicase chl1">
    <location>
        <begin position="1"/>
        <end position="782"/>
    </location>
</feature>
<feature type="domain" description="Helicase ATP-binding" evidence="4">
    <location>
        <begin position="1"/>
        <end position="352"/>
    </location>
</feature>
<feature type="region of interest" description="Disordered" evidence="5">
    <location>
        <begin position="23"/>
        <end position="66"/>
    </location>
</feature>
<feature type="short sequence motif" description="DEAH box">
    <location>
        <begin position="300"/>
        <end position="303"/>
    </location>
</feature>
<feature type="compositionally biased region" description="Basic and acidic residues" evidence="5">
    <location>
        <begin position="23"/>
        <end position="42"/>
    </location>
</feature>
<feature type="binding site" evidence="4">
    <location>
        <begin position="80"/>
        <end position="87"/>
    </location>
    <ligand>
        <name>ATP</name>
        <dbReference type="ChEBI" id="CHEBI:30616"/>
    </ligand>
</feature>
<feature type="binding site" evidence="1">
    <location>
        <position position="178"/>
    </location>
    <ligand>
        <name>[4Fe-4S] cluster</name>
        <dbReference type="ChEBI" id="CHEBI:49883"/>
    </ligand>
</feature>
<feature type="binding site" evidence="1">
    <location>
        <position position="196"/>
    </location>
    <ligand>
        <name>[4Fe-4S] cluster</name>
        <dbReference type="ChEBI" id="CHEBI:49883"/>
    </ligand>
</feature>
<feature type="binding site" evidence="1">
    <location>
        <position position="210"/>
    </location>
    <ligand>
        <name>[4Fe-4S] cluster</name>
        <dbReference type="ChEBI" id="CHEBI:49883"/>
    </ligand>
</feature>
<feature type="binding site" evidence="1">
    <location>
        <position position="249"/>
    </location>
    <ligand>
        <name>[4Fe-4S] cluster</name>
        <dbReference type="ChEBI" id="CHEBI:49883"/>
    </ligand>
</feature>
<reference key="1">
    <citation type="journal article" date="2005" name="Nature">
        <title>Genomic sequence of the pathogenic and allergenic filamentous fungus Aspergillus fumigatus.</title>
        <authorList>
            <person name="Nierman W.C."/>
            <person name="Pain A."/>
            <person name="Anderson M.J."/>
            <person name="Wortman J.R."/>
            <person name="Kim H.S."/>
            <person name="Arroyo J."/>
            <person name="Berriman M."/>
            <person name="Abe K."/>
            <person name="Archer D.B."/>
            <person name="Bermejo C."/>
            <person name="Bennett J.W."/>
            <person name="Bowyer P."/>
            <person name="Chen D."/>
            <person name="Collins M."/>
            <person name="Coulsen R."/>
            <person name="Davies R."/>
            <person name="Dyer P.S."/>
            <person name="Farman M.L."/>
            <person name="Fedorova N."/>
            <person name="Fedorova N.D."/>
            <person name="Feldblyum T.V."/>
            <person name="Fischer R."/>
            <person name="Fosker N."/>
            <person name="Fraser A."/>
            <person name="Garcia J.L."/>
            <person name="Garcia M.J."/>
            <person name="Goble A."/>
            <person name="Goldman G.H."/>
            <person name="Gomi K."/>
            <person name="Griffith-Jones S."/>
            <person name="Gwilliam R."/>
            <person name="Haas B.J."/>
            <person name="Haas H."/>
            <person name="Harris D.E."/>
            <person name="Horiuchi H."/>
            <person name="Huang J."/>
            <person name="Humphray S."/>
            <person name="Jimenez J."/>
            <person name="Keller N."/>
            <person name="Khouri H."/>
            <person name="Kitamoto K."/>
            <person name="Kobayashi T."/>
            <person name="Konzack S."/>
            <person name="Kulkarni R."/>
            <person name="Kumagai T."/>
            <person name="Lafton A."/>
            <person name="Latge J.-P."/>
            <person name="Li W."/>
            <person name="Lord A."/>
            <person name="Lu C."/>
            <person name="Majoros W.H."/>
            <person name="May G.S."/>
            <person name="Miller B.L."/>
            <person name="Mohamoud Y."/>
            <person name="Molina M."/>
            <person name="Monod M."/>
            <person name="Mouyna I."/>
            <person name="Mulligan S."/>
            <person name="Murphy L.D."/>
            <person name="O'Neil S."/>
            <person name="Paulsen I."/>
            <person name="Penalva M.A."/>
            <person name="Pertea M."/>
            <person name="Price C."/>
            <person name="Pritchard B.L."/>
            <person name="Quail M.A."/>
            <person name="Rabbinowitsch E."/>
            <person name="Rawlins N."/>
            <person name="Rajandream M.A."/>
            <person name="Reichard U."/>
            <person name="Renauld H."/>
            <person name="Robson G.D."/>
            <person name="Rodriguez de Cordoba S."/>
            <person name="Rodriguez-Pena J.M."/>
            <person name="Ronning C.M."/>
            <person name="Rutter S."/>
            <person name="Salzberg S.L."/>
            <person name="Sanchez M."/>
            <person name="Sanchez-Ferrero J.C."/>
            <person name="Saunders D."/>
            <person name="Seeger K."/>
            <person name="Squares R."/>
            <person name="Squares S."/>
            <person name="Takeuchi M."/>
            <person name="Tekaia F."/>
            <person name="Turner G."/>
            <person name="Vazquez de Aldana C.R."/>
            <person name="Weidman J."/>
            <person name="White O."/>
            <person name="Woodward J.R."/>
            <person name="Yu J.-H."/>
            <person name="Fraser C.M."/>
            <person name="Galagan J.E."/>
            <person name="Asai K."/>
            <person name="Machida M."/>
            <person name="Hall N."/>
            <person name="Barrell B.G."/>
            <person name="Denning D.W."/>
        </authorList>
    </citation>
    <scope>NUCLEOTIDE SEQUENCE [LARGE SCALE GENOMIC DNA]</scope>
    <source>
        <strain>ATCC MYA-4609 / CBS 101355 / FGSC A1100 / Af293</strain>
    </source>
</reference>
<gene>
    <name type="primary">chl1</name>
    <name type="ORF">AFUA_3G05590</name>
</gene>
<organism>
    <name type="scientific">Aspergillus fumigatus (strain ATCC MYA-4609 / CBS 101355 / FGSC A1100 / Af293)</name>
    <name type="common">Neosartorya fumigata</name>
    <dbReference type="NCBI Taxonomy" id="330879"/>
    <lineage>
        <taxon>Eukaryota</taxon>
        <taxon>Fungi</taxon>
        <taxon>Dikarya</taxon>
        <taxon>Ascomycota</taxon>
        <taxon>Pezizomycotina</taxon>
        <taxon>Eurotiomycetes</taxon>
        <taxon>Eurotiomycetidae</taxon>
        <taxon>Eurotiales</taxon>
        <taxon>Aspergillaceae</taxon>
        <taxon>Aspergillus</taxon>
        <taxon>Aspergillus subgen. Fumigati</taxon>
    </lineage>
</organism>
<protein>
    <recommendedName>
        <fullName evidence="2">ATP-dependent DNA helicase chl1</fullName>
        <ecNumber evidence="3">5.6.2.3</ecNumber>
    </recommendedName>
    <alternativeName>
        <fullName evidence="2">Chromosome loss protein 1</fullName>
    </alternativeName>
    <alternativeName>
        <fullName evidence="6">DNA 5'-3' helicase chl1</fullName>
    </alternativeName>
</protein>
<comment type="function">
    <text evidence="2">ATP-dependent DNA helicase important for chromosome transmission and normal cell cycle progression in G(2)/M (By similarity). May have a role in changing DNA topology to allow the loading of proteins involved in maintaining sister chromatid cohesion in the vicinity of the centromeres (By similarity). Has a specific role in chromosome segregation during meiosis II (By similarity).</text>
</comment>
<comment type="catalytic activity">
    <reaction evidence="3">
        <text>Couples ATP hydrolysis with the unwinding of duplex DNA at the replication fork by translocating in the 5'-3' direction. This creates two antiparallel DNA single strands (ssDNA). The leading ssDNA polymer is the template for DNA polymerase III holoenzyme which synthesizes a continuous strand.</text>
        <dbReference type="EC" id="5.6.2.3"/>
    </reaction>
</comment>
<comment type="catalytic activity">
    <reaction evidence="3">
        <text>ATP + H2O = ADP + phosphate + H(+)</text>
        <dbReference type="Rhea" id="RHEA:13065"/>
        <dbReference type="ChEBI" id="CHEBI:15377"/>
        <dbReference type="ChEBI" id="CHEBI:15378"/>
        <dbReference type="ChEBI" id="CHEBI:30616"/>
        <dbReference type="ChEBI" id="CHEBI:43474"/>
        <dbReference type="ChEBI" id="CHEBI:456216"/>
        <dbReference type="EC" id="5.6.2.3"/>
    </reaction>
</comment>
<comment type="cofactor">
    <cofactor evidence="1">
        <name>[4Fe-4S] cluster</name>
        <dbReference type="ChEBI" id="CHEBI:49883"/>
    </cofactor>
    <text evidence="1">Binds 1 [4Fe-4S] cluster.</text>
</comment>
<comment type="subcellular location">
    <subcellularLocation>
        <location evidence="2">Nucleus</location>
    </subcellularLocation>
</comment>
<comment type="similarity">
    <text evidence="6">Belongs to the DEAD box helicase family. DEAH subfamily. DDX11/CHL1 sub-subfamily.</text>
</comment>
<name>CHL1_ASPFU</name>
<sequence>MLEFAKRESARAVTEKRRALEARLEKIKVEEEKQRHATDHPKEARKRRRVDTSSGDPGPEQDDQFILDDYDSDADERMASSKKLSDISGLSTSTLELLERFKEQFSAPVEDEIGHEDDDVKIFYCSRTHSQLSQFSSELRRVKMPSSMPAELSTSDANTDEVQERVKHLTLGSRKNLCINPKVMSLGNAAAINERCLELQQPGIAAEKRCPYLPSKEDEGQILQFRDHTLATIKDIEDMGKLGKRMGICPYYASRSVLKHSENVLLKAQKIVTLPYPLLLQRSARDALDLSIKNHVVIIDEAHNLMDAICNIHSVTIRLSQLQTALLQLTTYAHKHKARLKGKNRSYIAQIIRLVSSIRDHLRSILGQNLPAEGTVDPSDLMAGKGVDQINPYKLSRYLQESKLARKVDGYVEFLKNKNQQSDDKPSSPVLFLVQSFLLSLMNPSAEGRFFYLKCHDDIQLRYMLLDPTNQFREIVEDARAVILAGGTMSPMSDYRNHLFSYIAPSRLDTFSYGHVIPPENLIAHTLVNGVLGSEFDFTYDSRDSEKMILDLGRTVATLCQAIPDGVVAFFPSYDYLSRIVAIWRKPLEGEKGETILSLIEREKSILYEGRDMGPKTDDLLQEYTRTIDSGQGALLLSVVGGKLSEGINFSDKLGRGVLIIGLPFPNIRSAVWQAKIQYVEQKTYNSSSGSEKDRQSIAKAAGKDFYENACMRAVNQCIGRAIRHRNDYAAIVMIDRRYEKANIQGKLPAWIKESMLRRSVRRPASALAADLSNFFSGRSPR</sequence>